<gene>
    <name type="primary">B3GALT3</name>
    <name type="ordered locus">At2g32430</name>
    <name type="ORF">T32F6.5</name>
</gene>
<reference key="1">
    <citation type="journal article" date="1999" name="Nature">
        <title>Sequence and analysis of chromosome 2 of the plant Arabidopsis thaliana.</title>
        <authorList>
            <person name="Lin X."/>
            <person name="Kaul S."/>
            <person name="Rounsley S.D."/>
            <person name="Shea T.P."/>
            <person name="Benito M.-I."/>
            <person name="Town C.D."/>
            <person name="Fujii C.Y."/>
            <person name="Mason T.M."/>
            <person name="Bowman C.L."/>
            <person name="Barnstead M.E."/>
            <person name="Feldblyum T.V."/>
            <person name="Buell C.R."/>
            <person name="Ketchum K.A."/>
            <person name="Lee J.J."/>
            <person name="Ronning C.M."/>
            <person name="Koo H.L."/>
            <person name="Moffat K.S."/>
            <person name="Cronin L.A."/>
            <person name="Shen M."/>
            <person name="Pai G."/>
            <person name="Van Aken S."/>
            <person name="Umayam L."/>
            <person name="Tallon L.J."/>
            <person name="Gill J.E."/>
            <person name="Adams M.D."/>
            <person name="Carrera A.J."/>
            <person name="Creasy T.H."/>
            <person name="Goodman H.M."/>
            <person name="Somerville C.R."/>
            <person name="Copenhaver G.P."/>
            <person name="Preuss D."/>
            <person name="Nierman W.C."/>
            <person name="White O."/>
            <person name="Eisen J.A."/>
            <person name="Salzberg S.L."/>
            <person name="Fraser C.M."/>
            <person name="Venter J.C."/>
        </authorList>
    </citation>
    <scope>NUCLEOTIDE SEQUENCE [LARGE SCALE GENOMIC DNA]</scope>
    <source>
        <strain>cv. Columbia</strain>
    </source>
</reference>
<reference key="2">
    <citation type="journal article" date="2017" name="Plant J.">
        <title>Araport11: a complete reannotation of the Arabidopsis thaliana reference genome.</title>
        <authorList>
            <person name="Cheng C.Y."/>
            <person name="Krishnakumar V."/>
            <person name="Chan A.P."/>
            <person name="Thibaud-Nissen F."/>
            <person name="Schobel S."/>
            <person name="Town C.D."/>
        </authorList>
    </citation>
    <scope>GENOME REANNOTATION</scope>
    <source>
        <strain>cv. Columbia</strain>
    </source>
</reference>
<reference key="3">
    <citation type="journal article" date="2003" name="Science">
        <title>Empirical analysis of transcriptional activity in the Arabidopsis genome.</title>
        <authorList>
            <person name="Yamada K."/>
            <person name="Lim J."/>
            <person name="Dale J.M."/>
            <person name="Chen H."/>
            <person name="Shinn P."/>
            <person name="Palm C.J."/>
            <person name="Southwick A.M."/>
            <person name="Wu H.C."/>
            <person name="Kim C.J."/>
            <person name="Nguyen M."/>
            <person name="Pham P.K."/>
            <person name="Cheuk R.F."/>
            <person name="Karlin-Newmann G."/>
            <person name="Liu S.X."/>
            <person name="Lam B."/>
            <person name="Sakano H."/>
            <person name="Wu T."/>
            <person name="Yu G."/>
            <person name="Miranda M."/>
            <person name="Quach H.L."/>
            <person name="Tripp M."/>
            <person name="Chang C.H."/>
            <person name="Lee J.M."/>
            <person name="Toriumi M.J."/>
            <person name="Chan M.M."/>
            <person name="Tang C.C."/>
            <person name="Onodera C.S."/>
            <person name="Deng J.M."/>
            <person name="Akiyama K."/>
            <person name="Ansari Y."/>
            <person name="Arakawa T."/>
            <person name="Banh J."/>
            <person name="Banno F."/>
            <person name="Bowser L."/>
            <person name="Brooks S.Y."/>
            <person name="Carninci P."/>
            <person name="Chao Q."/>
            <person name="Choy N."/>
            <person name="Enju A."/>
            <person name="Goldsmith A.D."/>
            <person name="Gurjal M."/>
            <person name="Hansen N.F."/>
            <person name="Hayashizaki Y."/>
            <person name="Johnson-Hopson C."/>
            <person name="Hsuan V.W."/>
            <person name="Iida K."/>
            <person name="Karnes M."/>
            <person name="Khan S."/>
            <person name="Koesema E."/>
            <person name="Ishida J."/>
            <person name="Jiang P.X."/>
            <person name="Jones T."/>
            <person name="Kawai J."/>
            <person name="Kamiya A."/>
            <person name="Meyers C."/>
            <person name="Nakajima M."/>
            <person name="Narusaka M."/>
            <person name="Seki M."/>
            <person name="Sakurai T."/>
            <person name="Satou M."/>
            <person name="Tamse R."/>
            <person name="Vaysberg M."/>
            <person name="Wallender E.K."/>
            <person name="Wong C."/>
            <person name="Yamamura Y."/>
            <person name="Yuan S."/>
            <person name="Shinozaki K."/>
            <person name="Davis R.W."/>
            <person name="Theologis A."/>
            <person name="Ecker J.R."/>
        </authorList>
    </citation>
    <scope>NUCLEOTIDE SEQUENCE [LARGE SCALE MRNA]</scope>
    <source>
        <strain>cv. Columbia</strain>
    </source>
</reference>
<reference key="4">
    <citation type="journal article" date="2008" name="Plant Mol. Biol.">
        <title>Identification of a novel group of putative Arabidopsis thaliana beta-(1,3)-galactosyltransferases.</title>
        <authorList>
            <person name="Qu Y."/>
            <person name="Egelund J."/>
            <person name="Gilson P.R."/>
            <person name="Houghton F."/>
            <person name="Gleeson P.A."/>
            <person name="Schultz C.J."/>
            <person name="Bacic A."/>
        </authorList>
    </citation>
    <scope>GENE FAMILY</scope>
    <scope>NOMENCLATURE</scope>
</reference>
<organism>
    <name type="scientific">Arabidopsis thaliana</name>
    <name type="common">Mouse-ear cress</name>
    <dbReference type="NCBI Taxonomy" id="3702"/>
    <lineage>
        <taxon>Eukaryota</taxon>
        <taxon>Viridiplantae</taxon>
        <taxon>Streptophyta</taxon>
        <taxon>Embryophyta</taxon>
        <taxon>Tracheophyta</taxon>
        <taxon>Spermatophyta</taxon>
        <taxon>Magnoliopsida</taxon>
        <taxon>eudicotyledons</taxon>
        <taxon>Gunneridae</taxon>
        <taxon>Pentapetalae</taxon>
        <taxon>rosids</taxon>
        <taxon>malvids</taxon>
        <taxon>Brassicales</taxon>
        <taxon>Brassicaceae</taxon>
        <taxon>Camelineae</taxon>
        <taxon>Arabidopsis</taxon>
    </lineage>
</organism>
<sequence length="409" mass="46483">MSTKIKGELFPSRSLVSKKWTFLLCFGSFCFGILFTDRMWIIPESKDMPRPSVSTEAERLKLISEGCDPKTLYQKEVNRDPQALFGEVSKTHNAIQTLDKTISSLEMELAAARSAQESLVNGAPISNDMEKKQLPGKRRYLMVVGINTAFSSRKRRDSVRTTWMPSGEKRKKLEEEKGIIIRFVIGHSATAGGILDRSIEAEDKKHGDFLRLDHVEGYLELSGKTKTYFSTAVSKWDAEFYVKVDDDVHVNIATLGETLVRHRKKHRVYLGCMKSGPVLSQKGVRYHEPEYWKFGENGNKYFRHATGQLYAISRDLASYISLNQHVLHKYANEDVTLGAWFIGLDVTHIDDRRLCCGTPPDCEWKAQAGNICVASFDWTCSGICRSADRIKEVHKRCGEPENAIWKARF</sequence>
<keyword id="KW-0328">Glycosyltransferase</keyword>
<keyword id="KW-0333">Golgi apparatus</keyword>
<keyword id="KW-0464">Manganese</keyword>
<keyword id="KW-0472">Membrane</keyword>
<keyword id="KW-1185">Reference proteome</keyword>
<keyword id="KW-0735">Signal-anchor</keyword>
<keyword id="KW-0808">Transferase</keyword>
<keyword id="KW-0812">Transmembrane</keyword>
<keyword id="KW-1133">Transmembrane helix</keyword>
<feature type="chain" id="PRO_0000359413" description="Probable beta-1,3-galactosyltransferase 3">
    <location>
        <begin position="1"/>
        <end position="409"/>
    </location>
</feature>
<feature type="transmembrane region" description="Helical; Signal-anchor for type II membrane protein" evidence="2">
    <location>
        <begin position="20"/>
        <end position="42"/>
    </location>
</feature>
<comment type="function">
    <text evidence="1">Beta-1,3-galactosyltransferase that transfers galactose from UDP-galactose to substrates with a terminal glycosyl residue.</text>
</comment>
<comment type="cofactor">
    <cofactor evidence="1">
        <name>Mn(2+)</name>
        <dbReference type="ChEBI" id="CHEBI:29035"/>
    </cofactor>
</comment>
<comment type="pathway">
    <text>Protein modification; protein glycosylation.</text>
</comment>
<comment type="subcellular location">
    <subcellularLocation>
        <location evidence="3">Golgi apparatus membrane</location>
        <topology evidence="3">Single-pass type II membrane protein</topology>
    </subcellularLocation>
</comment>
<comment type="similarity">
    <text evidence="3">Belongs to the glycosyltransferase 31 family.</text>
</comment>
<protein>
    <recommendedName>
        <fullName>Probable beta-1,3-galactosyltransferase 3</fullName>
        <ecNumber>2.4.1.-</ecNumber>
    </recommendedName>
</protein>
<accession>Q9ZV71</accession>
<evidence type="ECO:0000250" key="1"/>
<evidence type="ECO:0000255" key="2"/>
<evidence type="ECO:0000305" key="3"/>
<proteinExistence type="evidence at transcript level"/>
<dbReference type="EC" id="2.4.1.-"/>
<dbReference type="EMBL" id="AC005700">
    <property type="protein sequence ID" value="AAC69935.1"/>
    <property type="molecule type" value="Genomic_DNA"/>
</dbReference>
<dbReference type="EMBL" id="CP002685">
    <property type="protein sequence ID" value="AEC08684.1"/>
    <property type="molecule type" value="Genomic_DNA"/>
</dbReference>
<dbReference type="EMBL" id="BT004151">
    <property type="protein sequence ID" value="AAO42172.1"/>
    <property type="molecule type" value="mRNA"/>
</dbReference>
<dbReference type="PIR" id="A84733">
    <property type="entry name" value="A84733"/>
</dbReference>
<dbReference type="RefSeq" id="NP_180802.1">
    <property type="nucleotide sequence ID" value="NM_128802.3"/>
</dbReference>
<dbReference type="SMR" id="Q9ZV71"/>
<dbReference type="FunCoup" id="Q9ZV71">
    <property type="interactions" value="1791"/>
</dbReference>
<dbReference type="STRING" id="3702.Q9ZV71"/>
<dbReference type="CAZy" id="GT31">
    <property type="family name" value="Glycosyltransferase Family 31"/>
</dbReference>
<dbReference type="iPTMnet" id="Q9ZV71"/>
<dbReference type="PaxDb" id="3702-AT2G32430.1"/>
<dbReference type="ProteomicsDB" id="241114"/>
<dbReference type="EnsemblPlants" id="AT2G32430.1">
    <property type="protein sequence ID" value="AT2G32430.1"/>
    <property type="gene ID" value="AT2G32430"/>
</dbReference>
<dbReference type="GeneID" id="817804"/>
<dbReference type="Gramene" id="AT2G32430.1">
    <property type="protein sequence ID" value="AT2G32430.1"/>
    <property type="gene ID" value="AT2G32430"/>
</dbReference>
<dbReference type="KEGG" id="ath:AT2G32430"/>
<dbReference type="Araport" id="AT2G32430"/>
<dbReference type="TAIR" id="AT2G32430"/>
<dbReference type="eggNOG" id="KOG2288">
    <property type="taxonomic scope" value="Eukaryota"/>
</dbReference>
<dbReference type="HOGENOM" id="CLU_040730_3_0_1"/>
<dbReference type="InParanoid" id="Q9ZV71"/>
<dbReference type="OMA" id="MWIIPES"/>
<dbReference type="PhylomeDB" id="Q9ZV71"/>
<dbReference type="UniPathway" id="UPA00378"/>
<dbReference type="PRO" id="PR:Q9ZV71"/>
<dbReference type="Proteomes" id="UP000006548">
    <property type="component" value="Chromosome 2"/>
</dbReference>
<dbReference type="ExpressionAtlas" id="Q9ZV71">
    <property type="expression patterns" value="baseline and differential"/>
</dbReference>
<dbReference type="GO" id="GO:0000139">
    <property type="term" value="C:Golgi membrane"/>
    <property type="evidence" value="ECO:0007669"/>
    <property type="project" value="UniProtKB-SubCell"/>
</dbReference>
<dbReference type="GO" id="GO:0016758">
    <property type="term" value="F:hexosyltransferase activity"/>
    <property type="evidence" value="ECO:0007669"/>
    <property type="project" value="InterPro"/>
</dbReference>
<dbReference type="GO" id="GO:0006486">
    <property type="term" value="P:protein glycosylation"/>
    <property type="evidence" value="ECO:0007669"/>
    <property type="project" value="UniProtKB-UniPathway"/>
</dbReference>
<dbReference type="FunFam" id="3.90.550.50:FF:000002">
    <property type="entry name" value="Hexosyltransferase"/>
    <property type="match status" value="1"/>
</dbReference>
<dbReference type="Gene3D" id="3.90.550.50">
    <property type="match status" value="1"/>
</dbReference>
<dbReference type="InterPro" id="IPR025298">
    <property type="entry name" value="DUF4094"/>
</dbReference>
<dbReference type="InterPro" id="IPR002659">
    <property type="entry name" value="Glyco_trans_31"/>
</dbReference>
<dbReference type="PANTHER" id="PTHR11214:SF267">
    <property type="entry name" value="BETA-1,3-GALACTOSYLTRANSFERASE 3-RELATED"/>
    <property type="match status" value="1"/>
</dbReference>
<dbReference type="PANTHER" id="PTHR11214">
    <property type="entry name" value="BETA-1,3-N-ACETYLGLUCOSAMINYLTRANSFERASE"/>
    <property type="match status" value="1"/>
</dbReference>
<dbReference type="Pfam" id="PF13334">
    <property type="entry name" value="DUF4094"/>
    <property type="match status" value="1"/>
</dbReference>
<dbReference type="Pfam" id="PF01762">
    <property type="entry name" value="Galactosyl_T"/>
    <property type="match status" value="1"/>
</dbReference>
<name>B3GT3_ARATH</name>